<accession>P24754</accession>
<evidence type="ECO:0000250" key="1">
    <source>
        <dbReference type="UniProtKB" id="P0A910"/>
    </source>
</evidence>
<evidence type="ECO:0000255" key="2">
    <source>
        <dbReference type="PROSITE-ProRule" id="PRU00473"/>
    </source>
</evidence>
<evidence type="ECO:0000303" key="3">
    <source>
    </source>
</evidence>
<evidence type="ECO:0000305" key="4"/>
<gene>
    <name evidence="1" type="primary">ompA</name>
</gene>
<feature type="chain" id="PRO_0000196255" description="Outer membrane protein A">
    <location>
        <begin position="1" status="less than"/>
        <end position="243" status="greater than"/>
    </location>
</feature>
<feature type="transmembrane region" description="Beta stranded" evidence="1">
    <location>
        <begin position="1" status="less than"/>
        <end position="8"/>
    </location>
</feature>
<feature type="transmembrane region" description="Beta stranded" evidence="1">
    <location>
        <begin position="13"/>
        <end position="21"/>
    </location>
</feature>
<feature type="transmembrane region" description="Beta stranded" evidence="1">
    <location>
        <begin position="47"/>
        <end position="56"/>
    </location>
</feature>
<feature type="transmembrane region" description="Beta stranded" evidence="1">
    <location>
        <begin position="61"/>
        <end position="68"/>
    </location>
</feature>
<feature type="transmembrane region" description="Beta stranded" evidence="1">
    <location>
        <begin position="87"/>
        <end position="95"/>
    </location>
</feature>
<feature type="repeat" description="1">
    <location>
        <begin position="107"/>
        <end position="108"/>
    </location>
</feature>
<feature type="repeat" description="2">
    <location>
        <begin position="109"/>
        <end position="110"/>
    </location>
</feature>
<feature type="repeat" description="3">
    <location>
        <begin position="111"/>
        <end position="112"/>
    </location>
</feature>
<feature type="repeat" description="4">
    <location>
        <begin position="113"/>
        <end position="114"/>
    </location>
</feature>
<feature type="domain" description="OmpA-like" evidence="2">
    <location>
        <begin position="116"/>
        <end position="243" status="greater than"/>
    </location>
</feature>
<feature type="region of interest" description="4 X 2 AA tandem repeats of A-P">
    <location>
        <begin position="107"/>
        <end position="114"/>
    </location>
</feature>
<feature type="site" description="Part of salt bridge gating mechanism" evidence="1">
    <location>
        <position position="64"/>
    </location>
</feature>
<feature type="disulfide bond" evidence="1">
    <location>
        <begin position="217"/>
        <end position="229"/>
    </location>
</feature>
<feature type="non-terminal residue">
    <location>
        <position position="1"/>
    </location>
</feature>
<feature type="non-terminal residue">
    <location>
        <position position="243"/>
    </location>
</feature>
<proteinExistence type="inferred from homology"/>
<reference key="1">
    <citation type="journal article" date="1991" name="J. Gen. Microbiol.">
        <title>Molecular and evolutionary relationships among enteric bacteria.</title>
        <authorList>
            <person name="Lawrence J.G."/>
            <person name="Ochman H."/>
            <person name="Hartl D.L."/>
        </authorList>
    </citation>
    <scope>NUCLEOTIDE SEQUENCE [GENOMIC DNA]</scope>
    <source>
        <strain>ATCC 33650 / DSM 4560 / CCUG 15714 / JCM 1473 / NBRC 105704 / NCTC 12129 / CDC 980-72</strain>
        <strain>ATCC 33652 / CDC 1479-80</strain>
    </source>
</reference>
<dbReference type="EMBL" id="M63346">
    <property type="protein sequence ID" value="AAA24234.1"/>
    <property type="molecule type" value="Genomic_DNA"/>
</dbReference>
<dbReference type="EMBL" id="M63347">
    <property type="protein sequence ID" value="AAA24238.1"/>
    <property type="molecule type" value="Genomic_DNA"/>
</dbReference>
<dbReference type="PIR" id="I62386">
    <property type="entry name" value="I62386"/>
</dbReference>
<dbReference type="SMR" id="P24754"/>
<dbReference type="GO" id="GO:0009279">
    <property type="term" value="C:cell outer membrane"/>
    <property type="evidence" value="ECO:0007669"/>
    <property type="project" value="UniProtKB-SubCell"/>
</dbReference>
<dbReference type="GO" id="GO:0046930">
    <property type="term" value="C:pore complex"/>
    <property type="evidence" value="ECO:0007669"/>
    <property type="project" value="UniProtKB-KW"/>
</dbReference>
<dbReference type="GO" id="GO:0015288">
    <property type="term" value="F:porin activity"/>
    <property type="evidence" value="ECO:0007669"/>
    <property type="project" value="UniProtKB-KW"/>
</dbReference>
<dbReference type="GO" id="GO:0006811">
    <property type="term" value="P:monoatomic ion transport"/>
    <property type="evidence" value="ECO:0007669"/>
    <property type="project" value="UniProtKB-KW"/>
</dbReference>
<dbReference type="CDD" id="cd07185">
    <property type="entry name" value="OmpA_C-like"/>
    <property type="match status" value="1"/>
</dbReference>
<dbReference type="FunFam" id="3.30.1330.60:FF:000004">
    <property type="entry name" value="Outer membrane protein A"/>
    <property type="match status" value="1"/>
</dbReference>
<dbReference type="Gene3D" id="2.40.160.20">
    <property type="match status" value="1"/>
</dbReference>
<dbReference type="Gene3D" id="3.30.1330.60">
    <property type="entry name" value="OmpA-like domain"/>
    <property type="match status" value="1"/>
</dbReference>
<dbReference type="InterPro" id="IPR050330">
    <property type="entry name" value="Bact_OuterMem_StrucFunc"/>
</dbReference>
<dbReference type="InterPro" id="IPR011250">
    <property type="entry name" value="OMP/PagP_b-brl"/>
</dbReference>
<dbReference type="InterPro" id="IPR006664">
    <property type="entry name" value="OMP_bac"/>
</dbReference>
<dbReference type="InterPro" id="IPR002368">
    <property type="entry name" value="OmpA"/>
</dbReference>
<dbReference type="InterPro" id="IPR006665">
    <property type="entry name" value="OmpA-like"/>
</dbReference>
<dbReference type="InterPro" id="IPR006690">
    <property type="entry name" value="OMPA-like_CS"/>
</dbReference>
<dbReference type="InterPro" id="IPR036737">
    <property type="entry name" value="OmpA-like_sf"/>
</dbReference>
<dbReference type="InterPro" id="IPR000498">
    <property type="entry name" value="OmpA-like_TM_dom"/>
</dbReference>
<dbReference type="NCBIfam" id="NF008071">
    <property type="entry name" value="PRK10808.1"/>
    <property type="match status" value="1"/>
</dbReference>
<dbReference type="PANTHER" id="PTHR30329:SF21">
    <property type="entry name" value="LIPOPROTEIN YIAD-RELATED"/>
    <property type="match status" value="1"/>
</dbReference>
<dbReference type="PANTHER" id="PTHR30329">
    <property type="entry name" value="STATOR ELEMENT OF FLAGELLAR MOTOR COMPLEX"/>
    <property type="match status" value="1"/>
</dbReference>
<dbReference type="Pfam" id="PF00691">
    <property type="entry name" value="OmpA"/>
    <property type="match status" value="1"/>
</dbReference>
<dbReference type="Pfam" id="PF01389">
    <property type="entry name" value="OmpA_membrane"/>
    <property type="match status" value="1"/>
</dbReference>
<dbReference type="PRINTS" id="PR01021">
    <property type="entry name" value="OMPADOMAIN"/>
</dbReference>
<dbReference type="PRINTS" id="PR01022">
    <property type="entry name" value="OUTRMMBRANEA"/>
</dbReference>
<dbReference type="SUPFAM" id="SSF56925">
    <property type="entry name" value="OMPA-like"/>
    <property type="match status" value="1"/>
</dbReference>
<dbReference type="SUPFAM" id="SSF103088">
    <property type="entry name" value="OmpA-like"/>
    <property type="match status" value="1"/>
</dbReference>
<dbReference type="PROSITE" id="PS01068">
    <property type="entry name" value="OMPA_1"/>
    <property type="match status" value="1"/>
</dbReference>
<dbReference type="PROSITE" id="PS51123">
    <property type="entry name" value="OMPA_2"/>
    <property type="match status" value="1"/>
</dbReference>
<protein>
    <recommendedName>
        <fullName evidence="1">Outer membrane protein A</fullName>
    </recommendedName>
    <alternativeName>
        <fullName evidence="1">Outer membrane porin A</fullName>
    </alternativeName>
    <alternativeName>
        <fullName evidence="3">Outer membrane protein 3A</fullName>
    </alternativeName>
</protein>
<comment type="function">
    <text evidence="1">With TolR probably plays a role in maintaining the position of the peptidoglycan cell wall in the periplasm. Acts as a porin with low permeability that allows slow penetration of small solutes; an internal gate slows down solute passage.</text>
</comment>
<comment type="subunit">
    <text evidence="1">Monomer and homodimer.</text>
</comment>
<comment type="subcellular location">
    <subcellularLocation>
        <location evidence="1">Cell outer membrane</location>
        <topology evidence="1">Multi-pass membrane protein</topology>
    </subcellularLocation>
</comment>
<comment type="domain">
    <text evidence="1">The extracellular loops are most variable in sequence, and in some bacteria confer sensitivity to phage and/or colicins.</text>
</comment>
<comment type="similarity">
    <text evidence="4">Belongs to the outer membrane OOP (TC 1.B.6) superfamily. OmpA family.</text>
</comment>
<name>OMPA_ATLHE</name>
<keyword id="KW-0998">Cell outer membrane</keyword>
<keyword id="KW-1015">Disulfide bond</keyword>
<keyword id="KW-0406">Ion transport</keyword>
<keyword id="KW-0472">Membrane</keyword>
<keyword id="KW-0626">Porin</keyword>
<keyword id="KW-0677">Repeat</keyword>
<keyword id="KW-0812">Transmembrane</keyword>
<keyword id="KW-1134">Transmembrane beta strand</keyword>
<keyword id="KW-0813">Transport</keyword>
<organism>
    <name type="scientific">Atlantibacter hermannii</name>
    <name type="common">Escherichia hermannii</name>
    <dbReference type="NCBI Taxonomy" id="565"/>
    <lineage>
        <taxon>Bacteria</taxon>
        <taxon>Pseudomonadati</taxon>
        <taxon>Pseudomonadota</taxon>
        <taxon>Gammaproteobacteria</taxon>
        <taxon>Enterobacterales</taxon>
        <taxon>Enterobacteriaceae</taxon>
        <taxon>Atlantibacter</taxon>
    </lineage>
</organism>
<sequence>LTAKLGYPITDELDIYTRLGGMVWRADSKYNIPGGASFKDHDTGVSPVFAGGLEWAVTRDIATRLEYQWTNNIGDANTVGTRPDNGLLSVGVSYRFGQQEAAAPVVAPAPAPAPEVQTKHFTLKSDVLFNFNKATLKPEGQQALDQMYTQLSNLDPKDGSVVVLGFTDRIGSDAYNQGLSEKRAQSVVDYLISKGIPSDKISARGMGESNPVTGNTCDNVKPRAALIDCLAPDRRVEIEVKGI</sequence>